<protein>
    <recommendedName>
        <fullName>UDP-galactose transporter homolog 1</fullName>
    </recommendedName>
</protein>
<comment type="function">
    <text evidence="1 3">May be involved in specific transport of UDP-Gal from the cytosol to the Golgi lumen (By similarity). Involved in the maintenance of optimal conditions for the folding of secretory pathway proteins in the endoplasmic reticulum.</text>
</comment>
<comment type="subcellular location">
    <subcellularLocation>
        <location evidence="1">Endoplasmic reticulum membrane</location>
        <topology evidence="1">Multi-pass membrane protein</topology>
    </subcellularLocation>
</comment>
<comment type="similarity">
    <text evidence="4">Belongs to the nucleotide-sugar transporter family. SLC35B subfamily.</text>
</comment>
<name>HUT1_SCHPO</name>
<evidence type="ECO:0000250" key="1"/>
<evidence type="ECO:0000255" key="2"/>
<evidence type="ECO:0000269" key="3">
    <source>
    </source>
</evidence>
<evidence type="ECO:0000305" key="4"/>
<sequence>MAGFMRQLFVCMIGIYGSFLSWAVMQEKIITRPYDGERFSSPALLSLAQSFMTVLCGLLWNWFHGVSARGLLEPKFLGYFSSIAISASLSSYFGYASMFHLSYPTVILGKSCKLLPVIALHVFVYKRKFPPHKYLIVTMITAGVSIFSYFQNTSSKGKHAEHDSPIGLLLLFFNLLMDGITNTTQDKVFGKYKLSSVTMMIAVNLGIACLNGLYLISPFCNQQPLSFINRHPSILKDMLLFACTGSVGQLFIFFTLEKFGSITLVTITLTRKIFTMLLSVFHFHHTVSSIQWLGILLVFLGISLEAGLKILNNNSTAKKKAS</sequence>
<organism>
    <name type="scientific">Schizosaccharomyces pombe (strain 972 / ATCC 24843)</name>
    <name type="common">Fission yeast</name>
    <dbReference type="NCBI Taxonomy" id="284812"/>
    <lineage>
        <taxon>Eukaryota</taxon>
        <taxon>Fungi</taxon>
        <taxon>Dikarya</taxon>
        <taxon>Ascomycota</taxon>
        <taxon>Taphrinomycotina</taxon>
        <taxon>Schizosaccharomycetes</taxon>
        <taxon>Schizosaccharomycetales</taxon>
        <taxon>Schizosaccharomycetaceae</taxon>
        <taxon>Schizosaccharomyces</taxon>
    </lineage>
</organism>
<gene>
    <name type="primary">hut1</name>
    <name type="ORF">SPBC839.11c</name>
</gene>
<feature type="chain" id="PRO_0000213411" description="UDP-galactose transporter homolog 1">
    <location>
        <begin position="1"/>
        <end position="322"/>
    </location>
</feature>
<feature type="transmembrane region" description="Helical" evidence="2">
    <location>
        <begin position="4"/>
        <end position="24"/>
    </location>
</feature>
<feature type="transmembrane region" description="Helical" evidence="2">
    <location>
        <begin position="43"/>
        <end position="63"/>
    </location>
</feature>
<feature type="transmembrane region" description="Helical" evidence="2">
    <location>
        <begin position="76"/>
        <end position="96"/>
    </location>
</feature>
<feature type="transmembrane region" description="Helical" evidence="2">
    <location>
        <begin position="105"/>
        <end position="125"/>
    </location>
</feature>
<feature type="transmembrane region" description="Helical" evidence="2">
    <location>
        <begin position="129"/>
        <end position="149"/>
    </location>
</feature>
<feature type="transmembrane region" description="Helical" evidence="2">
    <location>
        <begin position="164"/>
        <end position="184"/>
    </location>
</feature>
<feature type="transmembrane region" description="Helical" evidence="2">
    <location>
        <begin position="199"/>
        <end position="219"/>
    </location>
</feature>
<feature type="transmembrane region" description="Helical" evidence="2">
    <location>
        <begin position="250"/>
        <end position="270"/>
    </location>
</feature>
<feature type="transmembrane region" description="Helical" evidence="2">
    <location>
        <begin position="290"/>
        <end position="310"/>
    </location>
</feature>
<feature type="glycosylation site" description="N-linked (GlcNAc...) asparagine" evidence="2">
    <location>
        <position position="152"/>
    </location>
</feature>
<feature type="glycosylation site" description="N-linked (GlcNAc...) asparagine" evidence="2">
    <location>
        <position position="313"/>
    </location>
</feature>
<feature type="glycosylation site" description="N-linked (GlcNAc...) asparagine" evidence="2">
    <location>
        <position position="314"/>
    </location>
</feature>
<keyword id="KW-0256">Endoplasmic reticulum</keyword>
<keyword id="KW-0325">Glycoprotein</keyword>
<keyword id="KW-0472">Membrane</keyword>
<keyword id="KW-1185">Reference proteome</keyword>
<keyword id="KW-0762">Sugar transport</keyword>
<keyword id="KW-0812">Transmembrane</keyword>
<keyword id="KW-1133">Transmembrane helix</keyword>
<keyword id="KW-0813">Transport</keyword>
<proteinExistence type="inferred from homology"/>
<reference key="1">
    <citation type="journal article" date="2002" name="Nature">
        <title>The genome sequence of Schizosaccharomyces pombe.</title>
        <authorList>
            <person name="Wood V."/>
            <person name="Gwilliam R."/>
            <person name="Rajandream M.A."/>
            <person name="Lyne M.H."/>
            <person name="Lyne R."/>
            <person name="Stewart A."/>
            <person name="Sgouros J.G."/>
            <person name="Peat N."/>
            <person name="Hayles J."/>
            <person name="Baker S.G."/>
            <person name="Basham D."/>
            <person name="Bowman S."/>
            <person name="Brooks K."/>
            <person name="Brown D."/>
            <person name="Brown S."/>
            <person name="Chillingworth T."/>
            <person name="Churcher C.M."/>
            <person name="Collins M."/>
            <person name="Connor R."/>
            <person name="Cronin A."/>
            <person name="Davis P."/>
            <person name="Feltwell T."/>
            <person name="Fraser A."/>
            <person name="Gentles S."/>
            <person name="Goble A."/>
            <person name="Hamlin N."/>
            <person name="Harris D.E."/>
            <person name="Hidalgo J."/>
            <person name="Hodgson G."/>
            <person name="Holroyd S."/>
            <person name="Hornsby T."/>
            <person name="Howarth S."/>
            <person name="Huckle E.J."/>
            <person name="Hunt S."/>
            <person name="Jagels K."/>
            <person name="James K.D."/>
            <person name="Jones L."/>
            <person name="Jones M."/>
            <person name="Leather S."/>
            <person name="McDonald S."/>
            <person name="McLean J."/>
            <person name="Mooney P."/>
            <person name="Moule S."/>
            <person name="Mungall K.L."/>
            <person name="Murphy L.D."/>
            <person name="Niblett D."/>
            <person name="Odell C."/>
            <person name="Oliver K."/>
            <person name="O'Neil S."/>
            <person name="Pearson D."/>
            <person name="Quail M.A."/>
            <person name="Rabbinowitsch E."/>
            <person name="Rutherford K.M."/>
            <person name="Rutter S."/>
            <person name="Saunders D."/>
            <person name="Seeger K."/>
            <person name="Sharp S."/>
            <person name="Skelton J."/>
            <person name="Simmonds M.N."/>
            <person name="Squares R."/>
            <person name="Squares S."/>
            <person name="Stevens K."/>
            <person name="Taylor K."/>
            <person name="Taylor R.G."/>
            <person name="Tivey A."/>
            <person name="Walsh S.V."/>
            <person name="Warren T."/>
            <person name="Whitehead S."/>
            <person name="Woodward J.R."/>
            <person name="Volckaert G."/>
            <person name="Aert R."/>
            <person name="Robben J."/>
            <person name="Grymonprez B."/>
            <person name="Weltjens I."/>
            <person name="Vanstreels E."/>
            <person name="Rieger M."/>
            <person name="Schaefer M."/>
            <person name="Mueller-Auer S."/>
            <person name="Gabel C."/>
            <person name="Fuchs M."/>
            <person name="Duesterhoeft A."/>
            <person name="Fritzc C."/>
            <person name="Holzer E."/>
            <person name="Moestl D."/>
            <person name="Hilbert H."/>
            <person name="Borzym K."/>
            <person name="Langer I."/>
            <person name="Beck A."/>
            <person name="Lehrach H."/>
            <person name="Reinhardt R."/>
            <person name="Pohl T.M."/>
            <person name="Eger P."/>
            <person name="Zimmermann W."/>
            <person name="Wedler H."/>
            <person name="Wambutt R."/>
            <person name="Purnelle B."/>
            <person name="Goffeau A."/>
            <person name="Cadieu E."/>
            <person name="Dreano S."/>
            <person name="Gloux S."/>
            <person name="Lelaure V."/>
            <person name="Mottier S."/>
            <person name="Galibert F."/>
            <person name="Aves S.J."/>
            <person name="Xiang Z."/>
            <person name="Hunt C."/>
            <person name="Moore K."/>
            <person name="Hurst S.M."/>
            <person name="Lucas M."/>
            <person name="Rochet M."/>
            <person name="Gaillardin C."/>
            <person name="Tallada V.A."/>
            <person name="Garzon A."/>
            <person name="Thode G."/>
            <person name="Daga R.R."/>
            <person name="Cruzado L."/>
            <person name="Jimenez J."/>
            <person name="Sanchez M."/>
            <person name="del Rey F."/>
            <person name="Benito J."/>
            <person name="Dominguez A."/>
            <person name="Revuelta J.L."/>
            <person name="Moreno S."/>
            <person name="Armstrong J."/>
            <person name="Forsburg S.L."/>
            <person name="Cerutti L."/>
            <person name="Lowe T."/>
            <person name="McCombie W.R."/>
            <person name="Paulsen I."/>
            <person name="Potashkin J."/>
            <person name="Shpakovski G.V."/>
            <person name="Ussery D."/>
            <person name="Barrell B.G."/>
            <person name="Nurse P."/>
        </authorList>
    </citation>
    <scope>NUCLEOTIDE SEQUENCE [LARGE SCALE GENOMIC DNA]</scope>
    <source>
        <strain>972 / ATCC 24843</strain>
    </source>
</reference>
<reference key="2">
    <citation type="journal article" date="2001" name="Yeast">
        <title>Hut1 proteins identified in Saccharomyces cerevisiae and Schizosaccharomyces pombe are functional homologues involved in the protein-folding process at the endoplasmic reticulum.</title>
        <authorList>
            <person name="Nakanishi H."/>
            <person name="Nakayama K."/>
            <person name="Yokota A."/>
            <person name="Tachikawa H."/>
            <person name="Takahashi N."/>
            <person name="Jigami Y."/>
        </authorList>
    </citation>
    <scope>FUNCTION</scope>
</reference>
<dbReference type="EMBL" id="CU329671">
    <property type="protein sequence ID" value="CAB46704.1"/>
    <property type="molecule type" value="Genomic_DNA"/>
</dbReference>
<dbReference type="PIR" id="T40718">
    <property type="entry name" value="T40718"/>
</dbReference>
<dbReference type="RefSeq" id="NP_595251.1">
    <property type="nucleotide sequence ID" value="NM_001021157.2"/>
</dbReference>
<dbReference type="SMR" id="Q8WZJ9"/>
<dbReference type="BioGRID" id="277720">
    <property type="interactions" value="6"/>
</dbReference>
<dbReference type="FunCoup" id="Q8WZJ9">
    <property type="interactions" value="417"/>
</dbReference>
<dbReference type="STRING" id="284812.Q8WZJ9"/>
<dbReference type="GlyCosmos" id="Q8WZJ9">
    <property type="glycosylation" value="3 sites, No reported glycans"/>
</dbReference>
<dbReference type="PaxDb" id="4896-SPBC839.11c.1"/>
<dbReference type="EnsemblFungi" id="SPBC839.11c.1">
    <property type="protein sequence ID" value="SPBC839.11c.1:pep"/>
    <property type="gene ID" value="SPBC839.11c"/>
</dbReference>
<dbReference type="GeneID" id="2541206"/>
<dbReference type="KEGG" id="spo:2541206"/>
<dbReference type="PomBase" id="SPBC839.11c">
    <property type="gene designation" value="hut1"/>
</dbReference>
<dbReference type="VEuPathDB" id="FungiDB:SPBC839.11c"/>
<dbReference type="eggNOG" id="KOG1581">
    <property type="taxonomic scope" value="Eukaryota"/>
</dbReference>
<dbReference type="HOGENOM" id="CLU_036019_0_0_1"/>
<dbReference type="InParanoid" id="Q8WZJ9"/>
<dbReference type="OMA" id="KIMTQHY"/>
<dbReference type="PhylomeDB" id="Q8WZJ9"/>
<dbReference type="PRO" id="PR:Q8WZJ9"/>
<dbReference type="Proteomes" id="UP000002485">
    <property type="component" value="Chromosome II"/>
</dbReference>
<dbReference type="GO" id="GO:0005783">
    <property type="term" value="C:endoplasmic reticulum"/>
    <property type="evidence" value="ECO:0007005"/>
    <property type="project" value="PomBase"/>
</dbReference>
<dbReference type="GO" id="GO:0005789">
    <property type="term" value="C:endoplasmic reticulum membrane"/>
    <property type="evidence" value="ECO:0000269"/>
    <property type="project" value="PomBase"/>
</dbReference>
<dbReference type="GO" id="GO:0000139">
    <property type="term" value="C:Golgi membrane"/>
    <property type="evidence" value="ECO:0000269"/>
    <property type="project" value="PomBase"/>
</dbReference>
<dbReference type="GO" id="GO:0005459">
    <property type="term" value="F:UDP-galactose transmembrane transporter activity"/>
    <property type="evidence" value="ECO:0000316"/>
    <property type="project" value="PomBase"/>
</dbReference>
<dbReference type="GO" id="GO:0005460">
    <property type="term" value="F:UDP-glucose transmembrane transporter activity"/>
    <property type="evidence" value="ECO:0000269"/>
    <property type="project" value="PomBase"/>
</dbReference>
<dbReference type="GO" id="GO:0072334">
    <property type="term" value="P:UDP-galactose transmembrane transport"/>
    <property type="evidence" value="ECO:0000316"/>
    <property type="project" value="PomBase"/>
</dbReference>
<dbReference type="GO" id="GO:0120112">
    <property type="term" value="P:UDP-glucose transmembrane transport into endoplasmic reticulum"/>
    <property type="evidence" value="ECO:0000314"/>
    <property type="project" value="PomBase"/>
</dbReference>
<dbReference type="InterPro" id="IPR013657">
    <property type="entry name" value="SCL35B1-4/HUT1"/>
</dbReference>
<dbReference type="PANTHER" id="PTHR10778">
    <property type="entry name" value="SOLUTE CARRIER FAMILY 35 MEMBER B"/>
    <property type="match status" value="1"/>
</dbReference>
<dbReference type="PANTHER" id="PTHR10778:SF10">
    <property type="entry name" value="SOLUTE CARRIER FAMILY 35 MEMBER B1"/>
    <property type="match status" value="1"/>
</dbReference>
<dbReference type="Pfam" id="PF08449">
    <property type="entry name" value="UAA"/>
    <property type="match status" value="1"/>
</dbReference>
<dbReference type="SUPFAM" id="SSF103481">
    <property type="entry name" value="Multidrug resistance efflux transporter EmrE"/>
    <property type="match status" value="1"/>
</dbReference>
<accession>Q8WZJ9</accession>